<accession>Q98DN4</accession>
<comment type="function">
    <text evidence="1">Pyrophosphatase that catalyzes the hydrolysis of nucleoside triphosphates to their monophosphate derivatives, with a high preference for the non-canonical purine nucleotides XTP (xanthosine triphosphate), dITP (deoxyinosine triphosphate) and ITP. Seems to function as a house-cleaning enzyme that removes non-canonical purine nucleotides from the nucleotide pool, thus preventing their incorporation into DNA/RNA and avoiding chromosomal lesions.</text>
</comment>
<comment type="catalytic activity">
    <reaction evidence="1">
        <text>XTP + H2O = XMP + diphosphate + H(+)</text>
        <dbReference type="Rhea" id="RHEA:28610"/>
        <dbReference type="ChEBI" id="CHEBI:15377"/>
        <dbReference type="ChEBI" id="CHEBI:15378"/>
        <dbReference type="ChEBI" id="CHEBI:33019"/>
        <dbReference type="ChEBI" id="CHEBI:57464"/>
        <dbReference type="ChEBI" id="CHEBI:61314"/>
        <dbReference type="EC" id="3.6.1.66"/>
    </reaction>
</comment>
<comment type="catalytic activity">
    <reaction evidence="1">
        <text>dITP + H2O = dIMP + diphosphate + H(+)</text>
        <dbReference type="Rhea" id="RHEA:28342"/>
        <dbReference type="ChEBI" id="CHEBI:15377"/>
        <dbReference type="ChEBI" id="CHEBI:15378"/>
        <dbReference type="ChEBI" id="CHEBI:33019"/>
        <dbReference type="ChEBI" id="CHEBI:61194"/>
        <dbReference type="ChEBI" id="CHEBI:61382"/>
        <dbReference type="EC" id="3.6.1.66"/>
    </reaction>
</comment>
<comment type="catalytic activity">
    <reaction evidence="1">
        <text>ITP + H2O = IMP + diphosphate + H(+)</text>
        <dbReference type="Rhea" id="RHEA:29399"/>
        <dbReference type="ChEBI" id="CHEBI:15377"/>
        <dbReference type="ChEBI" id="CHEBI:15378"/>
        <dbReference type="ChEBI" id="CHEBI:33019"/>
        <dbReference type="ChEBI" id="CHEBI:58053"/>
        <dbReference type="ChEBI" id="CHEBI:61402"/>
        <dbReference type="EC" id="3.6.1.66"/>
    </reaction>
</comment>
<comment type="cofactor">
    <cofactor evidence="1">
        <name>Mg(2+)</name>
        <dbReference type="ChEBI" id="CHEBI:18420"/>
    </cofactor>
    <text evidence="1">Binds 1 Mg(2+) ion per subunit.</text>
</comment>
<comment type="subunit">
    <text evidence="1">Homodimer.</text>
</comment>
<comment type="similarity">
    <text evidence="1">Belongs to the HAM1 NTPase family.</text>
</comment>
<feature type="chain" id="PRO_0000178217" description="dITP/XTP pyrophosphatase">
    <location>
        <begin position="1"/>
        <end position="220"/>
    </location>
</feature>
<feature type="active site" description="Proton acceptor" evidence="1">
    <location>
        <position position="74"/>
    </location>
</feature>
<feature type="binding site" evidence="1">
    <location>
        <begin position="13"/>
        <end position="18"/>
    </location>
    <ligand>
        <name>substrate</name>
    </ligand>
</feature>
<feature type="binding site" evidence="1">
    <location>
        <position position="45"/>
    </location>
    <ligand>
        <name>Mg(2+)</name>
        <dbReference type="ChEBI" id="CHEBI:18420"/>
    </ligand>
</feature>
<feature type="binding site" evidence="1">
    <location>
        <position position="74"/>
    </location>
    <ligand>
        <name>Mg(2+)</name>
        <dbReference type="ChEBI" id="CHEBI:18420"/>
    </ligand>
</feature>
<feature type="binding site" evidence="1">
    <location>
        <position position="75"/>
    </location>
    <ligand>
        <name>substrate</name>
    </ligand>
</feature>
<feature type="binding site" evidence="1">
    <location>
        <begin position="163"/>
        <end position="166"/>
    </location>
    <ligand>
        <name>substrate</name>
    </ligand>
</feature>
<feature type="binding site" evidence="1">
    <location>
        <position position="186"/>
    </location>
    <ligand>
        <name>substrate</name>
    </ligand>
</feature>
<feature type="binding site" evidence="1">
    <location>
        <begin position="199"/>
        <end position="200"/>
    </location>
    <ligand>
        <name>substrate</name>
    </ligand>
</feature>
<evidence type="ECO:0000255" key="1">
    <source>
        <dbReference type="HAMAP-Rule" id="MF_01405"/>
    </source>
</evidence>
<reference key="1">
    <citation type="journal article" date="2000" name="DNA Res.">
        <title>Complete genome structure of the nitrogen-fixing symbiotic bacterium Mesorhizobium loti.</title>
        <authorList>
            <person name="Kaneko T."/>
            <person name="Nakamura Y."/>
            <person name="Sato S."/>
            <person name="Asamizu E."/>
            <person name="Kato T."/>
            <person name="Sasamoto S."/>
            <person name="Watanabe A."/>
            <person name="Idesawa K."/>
            <person name="Ishikawa A."/>
            <person name="Kawashima K."/>
            <person name="Kimura T."/>
            <person name="Kishida Y."/>
            <person name="Kiyokawa C."/>
            <person name="Kohara M."/>
            <person name="Matsumoto M."/>
            <person name="Matsuno A."/>
            <person name="Mochizuki Y."/>
            <person name="Nakayama S."/>
            <person name="Nakazaki N."/>
            <person name="Shimpo S."/>
            <person name="Sugimoto M."/>
            <person name="Takeuchi C."/>
            <person name="Yamada M."/>
            <person name="Tabata S."/>
        </authorList>
    </citation>
    <scope>NUCLEOTIDE SEQUENCE [LARGE SCALE GENOMIC DNA]</scope>
    <source>
        <strain>LMG 29417 / CECT 9101 / MAFF 303099</strain>
    </source>
</reference>
<gene>
    <name type="ordered locus">mlr4626</name>
</gene>
<protein>
    <recommendedName>
        <fullName evidence="1">dITP/XTP pyrophosphatase</fullName>
        <ecNumber evidence="1">3.6.1.66</ecNumber>
    </recommendedName>
    <alternativeName>
        <fullName evidence="1">Non-canonical purine NTP pyrophosphatase</fullName>
    </alternativeName>
    <alternativeName>
        <fullName evidence="1">Non-standard purine NTP pyrophosphatase</fullName>
    </alternativeName>
    <alternativeName>
        <fullName evidence="1">Nucleoside-triphosphate diphosphatase</fullName>
    </alternativeName>
    <alternativeName>
        <fullName evidence="1">Nucleoside-triphosphate pyrophosphatase</fullName>
        <shortName evidence="1">NTPase</shortName>
    </alternativeName>
</protein>
<sequence length="220" mass="23520">MHTLDGKKIVVASHNAGKLREFADLMGPFGFEAKSAKDYGLPEPDETGTTFEENAYIKALAAAKATGLPALSDDSGLCVDALDGAPGVYTANWAETPDGSRDFAMAMQRTEVALQEVGAASAEQRKGRFVAVICLAFPDGAAEYYRGEAEGTLVWPPRGELGFGYDPVFLPNGFDKTFGEMSAEEKHGWKPGQAAALSHRARAFQKFAQARLDLPRLGSA</sequence>
<proteinExistence type="inferred from homology"/>
<keyword id="KW-0378">Hydrolase</keyword>
<keyword id="KW-0460">Magnesium</keyword>
<keyword id="KW-0479">Metal-binding</keyword>
<keyword id="KW-0546">Nucleotide metabolism</keyword>
<keyword id="KW-0547">Nucleotide-binding</keyword>
<dbReference type="EC" id="3.6.1.66" evidence="1"/>
<dbReference type="EMBL" id="BA000012">
    <property type="protein sequence ID" value="BAB51236.1"/>
    <property type="molecule type" value="Genomic_DNA"/>
</dbReference>
<dbReference type="SMR" id="Q98DN4"/>
<dbReference type="KEGG" id="mlo:mlr4626"/>
<dbReference type="eggNOG" id="COG0127">
    <property type="taxonomic scope" value="Bacteria"/>
</dbReference>
<dbReference type="HOGENOM" id="CLU_082080_0_0_5"/>
<dbReference type="Proteomes" id="UP000000552">
    <property type="component" value="Chromosome"/>
</dbReference>
<dbReference type="GO" id="GO:0005829">
    <property type="term" value="C:cytosol"/>
    <property type="evidence" value="ECO:0007669"/>
    <property type="project" value="TreeGrafter"/>
</dbReference>
<dbReference type="GO" id="GO:0035870">
    <property type="term" value="F:dITP diphosphatase activity"/>
    <property type="evidence" value="ECO:0007669"/>
    <property type="project" value="RHEA"/>
</dbReference>
<dbReference type="GO" id="GO:0036220">
    <property type="term" value="F:ITP diphosphatase activity"/>
    <property type="evidence" value="ECO:0007669"/>
    <property type="project" value="UniProtKB-EC"/>
</dbReference>
<dbReference type="GO" id="GO:0046872">
    <property type="term" value="F:metal ion binding"/>
    <property type="evidence" value="ECO:0007669"/>
    <property type="project" value="UniProtKB-KW"/>
</dbReference>
<dbReference type="GO" id="GO:0000166">
    <property type="term" value="F:nucleotide binding"/>
    <property type="evidence" value="ECO:0007669"/>
    <property type="project" value="UniProtKB-KW"/>
</dbReference>
<dbReference type="GO" id="GO:0017111">
    <property type="term" value="F:ribonucleoside triphosphate phosphatase activity"/>
    <property type="evidence" value="ECO:0007669"/>
    <property type="project" value="InterPro"/>
</dbReference>
<dbReference type="GO" id="GO:0036222">
    <property type="term" value="F:XTP diphosphatase activity"/>
    <property type="evidence" value="ECO:0007669"/>
    <property type="project" value="RHEA"/>
</dbReference>
<dbReference type="GO" id="GO:0009117">
    <property type="term" value="P:nucleotide metabolic process"/>
    <property type="evidence" value="ECO:0007669"/>
    <property type="project" value="UniProtKB-KW"/>
</dbReference>
<dbReference type="GO" id="GO:0009146">
    <property type="term" value="P:purine nucleoside triphosphate catabolic process"/>
    <property type="evidence" value="ECO:0007669"/>
    <property type="project" value="UniProtKB-UniRule"/>
</dbReference>
<dbReference type="CDD" id="cd00515">
    <property type="entry name" value="HAM1"/>
    <property type="match status" value="1"/>
</dbReference>
<dbReference type="FunFam" id="3.90.950.10:FF:000001">
    <property type="entry name" value="dITP/XTP pyrophosphatase"/>
    <property type="match status" value="1"/>
</dbReference>
<dbReference type="Gene3D" id="3.90.950.10">
    <property type="match status" value="1"/>
</dbReference>
<dbReference type="HAMAP" id="MF_01405">
    <property type="entry name" value="Non_canon_purine_NTPase"/>
    <property type="match status" value="1"/>
</dbReference>
<dbReference type="InterPro" id="IPR020922">
    <property type="entry name" value="dITP/XTP_pyrophosphatase"/>
</dbReference>
<dbReference type="InterPro" id="IPR029001">
    <property type="entry name" value="ITPase-like_fam"/>
</dbReference>
<dbReference type="InterPro" id="IPR002637">
    <property type="entry name" value="RdgB/HAM1"/>
</dbReference>
<dbReference type="NCBIfam" id="TIGR00042">
    <property type="entry name" value="RdgB/HAM1 family non-canonical purine NTP pyrophosphatase"/>
    <property type="match status" value="1"/>
</dbReference>
<dbReference type="PANTHER" id="PTHR11067:SF9">
    <property type="entry name" value="INOSINE TRIPHOSPHATE PYROPHOSPHATASE"/>
    <property type="match status" value="1"/>
</dbReference>
<dbReference type="PANTHER" id="PTHR11067">
    <property type="entry name" value="INOSINE TRIPHOSPHATE PYROPHOSPHATASE/HAM1 PROTEIN"/>
    <property type="match status" value="1"/>
</dbReference>
<dbReference type="Pfam" id="PF01725">
    <property type="entry name" value="Ham1p_like"/>
    <property type="match status" value="1"/>
</dbReference>
<dbReference type="SUPFAM" id="SSF52972">
    <property type="entry name" value="ITPase-like"/>
    <property type="match status" value="1"/>
</dbReference>
<organism>
    <name type="scientific">Mesorhizobium japonicum (strain LMG 29417 / CECT 9101 / MAFF 303099)</name>
    <name type="common">Mesorhizobium loti (strain MAFF 303099)</name>
    <dbReference type="NCBI Taxonomy" id="266835"/>
    <lineage>
        <taxon>Bacteria</taxon>
        <taxon>Pseudomonadati</taxon>
        <taxon>Pseudomonadota</taxon>
        <taxon>Alphaproteobacteria</taxon>
        <taxon>Hyphomicrobiales</taxon>
        <taxon>Phyllobacteriaceae</taxon>
        <taxon>Mesorhizobium</taxon>
    </lineage>
</organism>
<name>IXTPA_RHILO</name>